<sequence length="38" mass="4497">MTQSNPNEQNVELNRTSLYWGLLLIFVLAVLFSNYFFN</sequence>
<comment type="function">
    <text evidence="1">One of the components of the core complex of photosystem II (PSII). PSII is a light-driven water:plastoquinone oxidoreductase that uses light energy to abstract electrons from H(2)O, generating O(2) and a proton gradient subsequently used for ATP formation. It consists of a core antenna complex that captures photons, and an electron transfer chain that converts photonic excitation into a charge separation. This subunit is found at the monomer-monomer interface and is required for correct PSII assembly and/or dimerization.</text>
</comment>
<comment type="subunit">
    <text evidence="1">PSII is composed of 1 copy each of membrane proteins PsbA, PsbB, PsbC, PsbD, PsbE, PsbF, PsbH, PsbI, PsbJ, PsbK, PsbL, PsbM, PsbT, PsbX, PsbY, PsbZ, Psb30/Ycf12, at least 3 peripheral proteins of the oxygen-evolving complex and a large number of cofactors. It forms dimeric complexes.</text>
</comment>
<comment type="subcellular location">
    <subcellularLocation>
        <location evidence="1">Plastid</location>
        <location evidence="1">Chloroplast thylakoid membrane</location>
        <topology evidence="1">Single-pass membrane protein</topology>
    </subcellularLocation>
</comment>
<comment type="similarity">
    <text evidence="1">Belongs to the PsbL family.</text>
</comment>
<gene>
    <name evidence="1" type="primary">psbL</name>
</gene>
<geneLocation type="chloroplast"/>
<keyword id="KW-0150">Chloroplast</keyword>
<keyword id="KW-0472">Membrane</keyword>
<keyword id="KW-0602">Photosynthesis</keyword>
<keyword id="KW-0604">Photosystem II</keyword>
<keyword id="KW-0934">Plastid</keyword>
<keyword id="KW-0674">Reaction center</keyword>
<keyword id="KW-0793">Thylakoid</keyword>
<keyword id="KW-0812">Transmembrane</keyword>
<keyword id="KW-1133">Transmembrane helix</keyword>
<evidence type="ECO:0000255" key="1">
    <source>
        <dbReference type="HAMAP-Rule" id="MF_01317"/>
    </source>
</evidence>
<protein>
    <recommendedName>
        <fullName evidence="1">Photosystem II reaction center protein L</fullName>
        <shortName evidence="1">PSII-L</shortName>
    </recommendedName>
</protein>
<reference key="1">
    <citation type="submission" date="2007-03" db="EMBL/GenBank/DDBJ databases">
        <title>Sequencing analysis of Nasturtium officinale chloroplast DNA.</title>
        <authorList>
            <person name="Hosouchi T."/>
            <person name="Tsuruoka H."/>
            <person name="Kotani H."/>
        </authorList>
    </citation>
    <scope>NUCLEOTIDE SEQUENCE [LARGE SCALE GENOMIC DNA]</scope>
</reference>
<proteinExistence type="inferred from homology"/>
<name>PSBL_NASOF</name>
<dbReference type="EMBL" id="AP009376">
    <property type="protein sequence ID" value="BAF50653.1"/>
    <property type="molecule type" value="Genomic_DNA"/>
</dbReference>
<dbReference type="RefSeq" id="YP_001123829.1">
    <property type="nucleotide sequence ID" value="NC_009275.1"/>
</dbReference>
<dbReference type="SMR" id="A4QLU8"/>
<dbReference type="GeneID" id="4962098"/>
<dbReference type="GO" id="GO:0009535">
    <property type="term" value="C:chloroplast thylakoid membrane"/>
    <property type="evidence" value="ECO:0007669"/>
    <property type="project" value="UniProtKB-SubCell"/>
</dbReference>
<dbReference type="GO" id="GO:0009539">
    <property type="term" value="C:photosystem II reaction center"/>
    <property type="evidence" value="ECO:0007669"/>
    <property type="project" value="InterPro"/>
</dbReference>
<dbReference type="GO" id="GO:0015979">
    <property type="term" value="P:photosynthesis"/>
    <property type="evidence" value="ECO:0007669"/>
    <property type="project" value="UniProtKB-UniRule"/>
</dbReference>
<dbReference type="HAMAP" id="MF_01317">
    <property type="entry name" value="PSII_PsbL"/>
    <property type="match status" value="1"/>
</dbReference>
<dbReference type="InterPro" id="IPR003372">
    <property type="entry name" value="PSII_PsbL"/>
</dbReference>
<dbReference type="InterPro" id="IPR037266">
    <property type="entry name" value="PSII_PsbL_sf"/>
</dbReference>
<dbReference type="NCBIfam" id="NF001972">
    <property type="entry name" value="PRK00753.1"/>
    <property type="match status" value="1"/>
</dbReference>
<dbReference type="Pfam" id="PF02419">
    <property type="entry name" value="PsbL"/>
    <property type="match status" value="1"/>
</dbReference>
<dbReference type="SUPFAM" id="SSF161017">
    <property type="entry name" value="Photosystem II reaction center protein L, PsbL"/>
    <property type="match status" value="1"/>
</dbReference>
<feature type="chain" id="PRO_0000306239" description="Photosystem II reaction center protein L">
    <location>
        <begin position="1"/>
        <end position="38"/>
    </location>
</feature>
<feature type="transmembrane region" description="Helical" evidence="1">
    <location>
        <begin position="17"/>
        <end position="37"/>
    </location>
</feature>
<organism>
    <name type="scientific">Nasturtium officinale</name>
    <name type="common">Watercress</name>
    <name type="synonym">Rorippa nasturtium-aquaticum</name>
    <dbReference type="NCBI Taxonomy" id="65948"/>
    <lineage>
        <taxon>Eukaryota</taxon>
        <taxon>Viridiplantae</taxon>
        <taxon>Streptophyta</taxon>
        <taxon>Embryophyta</taxon>
        <taxon>Tracheophyta</taxon>
        <taxon>Spermatophyta</taxon>
        <taxon>Magnoliopsida</taxon>
        <taxon>eudicotyledons</taxon>
        <taxon>Gunneridae</taxon>
        <taxon>Pentapetalae</taxon>
        <taxon>rosids</taxon>
        <taxon>malvids</taxon>
        <taxon>Brassicales</taxon>
        <taxon>Brassicaceae</taxon>
        <taxon>Cardamineae</taxon>
        <taxon>Nasturtium</taxon>
    </lineage>
</organism>
<accession>A4QLU8</accession>